<reference evidence="7 9" key="1">
    <citation type="journal article" date="2004" name="J. Biol. Chem.">
        <title>VIAF, a conserved inhibitor of apoptosis (IAP)-interacting factor that modulates caspase activation.</title>
        <authorList>
            <person name="Wilkinson J.C."/>
            <person name="Richter B.W.M."/>
            <person name="Wilkinson A.S."/>
            <person name="Burstein E."/>
            <person name="Rumble J.M."/>
            <person name="Balliu B."/>
            <person name="Duckett C.S."/>
        </authorList>
    </citation>
    <scope>NUCLEOTIDE SEQUENCE [MRNA]</scope>
</reference>
<reference evidence="8" key="2">
    <citation type="journal article" date="2000" name="Science">
        <title>The genome sequence of Drosophila melanogaster.</title>
        <authorList>
            <person name="Adams M.D."/>
            <person name="Celniker S.E."/>
            <person name="Holt R.A."/>
            <person name="Evans C.A."/>
            <person name="Gocayne J.D."/>
            <person name="Amanatides P.G."/>
            <person name="Scherer S.E."/>
            <person name="Li P.W."/>
            <person name="Hoskins R.A."/>
            <person name="Galle R.F."/>
            <person name="George R.A."/>
            <person name="Lewis S.E."/>
            <person name="Richards S."/>
            <person name="Ashburner M."/>
            <person name="Henderson S.N."/>
            <person name="Sutton G.G."/>
            <person name="Wortman J.R."/>
            <person name="Yandell M.D."/>
            <person name="Zhang Q."/>
            <person name="Chen L.X."/>
            <person name="Brandon R.C."/>
            <person name="Rogers Y.-H.C."/>
            <person name="Blazej R.G."/>
            <person name="Champe M."/>
            <person name="Pfeiffer B.D."/>
            <person name="Wan K.H."/>
            <person name="Doyle C."/>
            <person name="Baxter E.G."/>
            <person name="Helt G."/>
            <person name="Nelson C.R."/>
            <person name="Miklos G.L.G."/>
            <person name="Abril J.F."/>
            <person name="Agbayani A."/>
            <person name="An H.-J."/>
            <person name="Andrews-Pfannkoch C."/>
            <person name="Baldwin D."/>
            <person name="Ballew R.M."/>
            <person name="Basu A."/>
            <person name="Baxendale J."/>
            <person name="Bayraktaroglu L."/>
            <person name="Beasley E.M."/>
            <person name="Beeson K.Y."/>
            <person name="Benos P.V."/>
            <person name="Berman B.P."/>
            <person name="Bhandari D."/>
            <person name="Bolshakov S."/>
            <person name="Borkova D."/>
            <person name="Botchan M.R."/>
            <person name="Bouck J."/>
            <person name="Brokstein P."/>
            <person name="Brottier P."/>
            <person name="Burtis K.C."/>
            <person name="Busam D.A."/>
            <person name="Butler H."/>
            <person name="Cadieu E."/>
            <person name="Center A."/>
            <person name="Chandra I."/>
            <person name="Cherry J.M."/>
            <person name="Cawley S."/>
            <person name="Dahlke C."/>
            <person name="Davenport L.B."/>
            <person name="Davies P."/>
            <person name="de Pablos B."/>
            <person name="Delcher A."/>
            <person name="Deng Z."/>
            <person name="Mays A.D."/>
            <person name="Dew I."/>
            <person name="Dietz S.M."/>
            <person name="Dodson K."/>
            <person name="Doup L.E."/>
            <person name="Downes M."/>
            <person name="Dugan-Rocha S."/>
            <person name="Dunkov B.C."/>
            <person name="Dunn P."/>
            <person name="Durbin K.J."/>
            <person name="Evangelista C.C."/>
            <person name="Ferraz C."/>
            <person name="Ferriera S."/>
            <person name="Fleischmann W."/>
            <person name="Fosler C."/>
            <person name="Gabrielian A.E."/>
            <person name="Garg N.S."/>
            <person name="Gelbart W.M."/>
            <person name="Glasser K."/>
            <person name="Glodek A."/>
            <person name="Gong F."/>
            <person name="Gorrell J.H."/>
            <person name="Gu Z."/>
            <person name="Guan P."/>
            <person name="Harris M."/>
            <person name="Harris N.L."/>
            <person name="Harvey D.A."/>
            <person name="Heiman T.J."/>
            <person name="Hernandez J.R."/>
            <person name="Houck J."/>
            <person name="Hostin D."/>
            <person name="Houston K.A."/>
            <person name="Howland T.J."/>
            <person name="Wei M.-H."/>
            <person name="Ibegwam C."/>
            <person name="Jalali M."/>
            <person name="Kalush F."/>
            <person name="Karpen G.H."/>
            <person name="Ke Z."/>
            <person name="Kennison J.A."/>
            <person name="Ketchum K.A."/>
            <person name="Kimmel B.E."/>
            <person name="Kodira C.D."/>
            <person name="Kraft C.L."/>
            <person name="Kravitz S."/>
            <person name="Kulp D."/>
            <person name="Lai Z."/>
            <person name="Lasko P."/>
            <person name="Lei Y."/>
            <person name="Levitsky A.A."/>
            <person name="Li J.H."/>
            <person name="Li Z."/>
            <person name="Liang Y."/>
            <person name="Lin X."/>
            <person name="Liu X."/>
            <person name="Mattei B."/>
            <person name="McIntosh T.C."/>
            <person name="McLeod M.P."/>
            <person name="McPherson D."/>
            <person name="Merkulov G."/>
            <person name="Milshina N.V."/>
            <person name="Mobarry C."/>
            <person name="Morris J."/>
            <person name="Moshrefi A."/>
            <person name="Mount S.M."/>
            <person name="Moy M."/>
            <person name="Murphy B."/>
            <person name="Murphy L."/>
            <person name="Muzny D.M."/>
            <person name="Nelson D.L."/>
            <person name="Nelson D.R."/>
            <person name="Nelson K.A."/>
            <person name="Nixon K."/>
            <person name="Nusskern D.R."/>
            <person name="Pacleb J.M."/>
            <person name="Palazzolo M."/>
            <person name="Pittman G.S."/>
            <person name="Pan S."/>
            <person name="Pollard J."/>
            <person name="Puri V."/>
            <person name="Reese M.G."/>
            <person name="Reinert K."/>
            <person name="Remington K."/>
            <person name="Saunders R.D.C."/>
            <person name="Scheeler F."/>
            <person name="Shen H."/>
            <person name="Shue B.C."/>
            <person name="Siden-Kiamos I."/>
            <person name="Simpson M."/>
            <person name="Skupski M.P."/>
            <person name="Smith T.J."/>
            <person name="Spier E."/>
            <person name="Spradling A.C."/>
            <person name="Stapleton M."/>
            <person name="Strong R."/>
            <person name="Sun E."/>
            <person name="Svirskas R."/>
            <person name="Tector C."/>
            <person name="Turner R."/>
            <person name="Venter E."/>
            <person name="Wang A.H."/>
            <person name="Wang X."/>
            <person name="Wang Z.-Y."/>
            <person name="Wassarman D.A."/>
            <person name="Weinstock G.M."/>
            <person name="Weissenbach J."/>
            <person name="Williams S.M."/>
            <person name="Woodage T."/>
            <person name="Worley K.C."/>
            <person name="Wu D."/>
            <person name="Yang S."/>
            <person name="Yao Q.A."/>
            <person name="Ye J."/>
            <person name="Yeh R.-F."/>
            <person name="Zaveri J.S."/>
            <person name="Zhan M."/>
            <person name="Zhang G."/>
            <person name="Zhao Q."/>
            <person name="Zheng L."/>
            <person name="Zheng X.H."/>
            <person name="Zhong F.N."/>
            <person name="Zhong W."/>
            <person name="Zhou X."/>
            <person name="Zhu S.C."/>
            <person name="Zhu X."/>
            <person name="Smith H.O."/>
            <person name="Gibbs R.A."/>
            <person name="Myers E.W."/>
            <person name="Rubin G.M."/>
            <person name="Venter J.C."/>
        </authorList>
    </citation>
    <scope>NUCLEOTIDE SEQUENCE [LARGE SCALE GENOMIC DNA]</scope>
    <source>
        <strain evidence="4">Berkeley</strain>
    </source>
</reference>
<reference evidence="7 8" key="3">
    <citation type="journal article" date="2002" name="Genome Biol.">
        <title>Annotation of the Drosophila melanogaster euchromatic genome: a systematic review.</title>
        <authorList>
            <person name="Misra S."/>
            <person name="Crosby M.A."/>
            <person name="Mungall C.J."/>
            <person name="Matthews B.B."/>
            <person name="Campbell K.S."/>
            <person name="Hradecky P."/>
            <person name="Huang Y."/>
            <person name="Kaminker J.S."/>
            <person name="Millburn G.H."/>
            <person name="Prochnik S.E."/>
            <person name="Smith C.D."/>
            <person name="Tupy J.L."/>
            <person name="Whitfield E.J."/>
            <person name="Bayraktaroglu L."/>
            <person name="Berman B.P."/>
            <person name="Bettencourt B.R."/>
            <person name="Celniker S.E."/>
            <person name="de Grey A.D.N.J."/>
            <person name="Drysdale R.A."/>
            <person name="Harris N.L."/>
            <person name="Richter J."/>
            <person name="Russo S."/>
            <person name="Schroeder A.J."/>
            <person name="Shu S.Q."/>
            <person name="Stapleton M."/>
            <person name="Yamada C."/>
            <person name="Ashburner M."/>
            <person name="Gelbart W.M."/>
            <person name="Rubin G.M."/>
            <person name="Lewis S.E."/>
        </authorList>
    </citation>
    <scope>GENOME REANNOTATION</scope>
    <source>
        <strain>Berkeley</strain>
    </source>
</reference>
<reference evidence="7 10" key="4">
    <citation type="journal article" date="2002" name="Genome Biol.">
        <title>A Drosophila full-length cDNA resource.</title>
        <authorList>
            <person name="Stapleton M."/>
            <person name="Carlson J.W."/>
            <person name="Brokstein P."/>
            <person name="Yu C."/>
            <person name="Champe M."/>
            <person name="George R.A."/>
            <person name="Guarin H."/>
            <person name="Kronmiller B."/>
            <person name="Pacleb J.M."/>
            <person name="Park S."/>
            <person name="Wan K.H."/>
            <person name="Rubin G.M."/>
            <person name="Celniker S.E."/>
        </authorList>
    </citation>
    <scope>NUCLEOTIDE SEQUENCE [LARGE SCALE MRNA]</scope>
    <source>
        <strain evidence="10">Berkeley</strain>
        <tissue evidence="5">Head</tissue>
    </source>
</reference>
<reference key="5">
    <citation type="journal article" date="2008" name="J. Proteome Res.">
        <title>Phosphoproteome analysis of Drosophila melanogaster embryos.</title>
        <authorList>
            <person name="Zhai B."/>
            <person name="Villen J."/>
            <person name="Beausoleil S.A."/>
            <person name="Mintseris J."/>
            <person name="Gygi S.P."/>
        </authorList>
    </citation>
    <scope>PHOSPHORYLATION [LARGE SCALE ANALYSIS] AT SER-63 AND SER-73</scope>
    <scope>IDENTIFICATION BY MASS SPECTROMETRY</scope>
    <source>
        <tissue>Embryo</tissue>
    </source>
</reference>
<feature type="chain" id="PRO_0000163761" description="Phosducin-like protein 2">
    <location>
        <begin position="1"/>
        <end position="240"/>
    </location>
</feature>
<feature type="domain" description="Phosducin" evidence="3">
    <location>
        <begin position="54"/>
        <end position="214"/>
    </location>
</feature>
<feature type="region of interest" description="Thioredoxin fold" evidence="1">
    <location>
        <begin position="99"/>
        <end position="240"/>
    </location>
</feature>
<feature type="modified residue" description="Phosphoserine" evidence="6">
    <location>
        <position position="63"/>
    </location>
</feature>
<feature type="modified residue" description="Phosphoserine" evidence="6">
    <location>
        <position position="73"/>
    </location>
</feature>
<feature type="sequence conflict" description="In Ref. 1; AAG21889." evidence="7" ref="1">
    <original>R</original>
    <variation>C</variation>
    <location>
        <position position="156"/>
    </location>
</feature>
<sequence length="240" mass="27440">MQDPNEDTEWNDVLRAKGIIGPKAKEAEITEDQIQKLMDDAIQRRTDLPLNEGQRDKKIDDMSLDELDELEDSEDEAVLEQYRQRRIAEMRATAEKARFGSVREISGQDYVNEVTKAGEGIWVVLHLYANGVPLCALIHHHMQQLAVRFPQTKFVRSVATTCIPNFPEKNLPTIFIYHEGALRKQYIGPLELRGDKLTAEELEFMLGQAGAVPTEITEDPRPQIRDKMLADLEDKSSDFY</sequence>
<name>PHLP2_DROME</name>
<protein>
    <recommendedName>
        <fullName evidence="11">Phosducin-like protein 2</fullName>
    </recommendedName>
    <alternativeName>
        <fullName evidence="7">Viral inhibitor of apoptosis-associated factor homolog</fullName>
        <shortName evidence="7">Viral IAP-associated factor</shortName>
    </alternativeName>
</protein>
<keyword id="KW-0053">Apoptosis</keyword>
<keyword id="KW-0963">Cytoplasm</keyword>
<keyword id="KW-0597">Phosphoprotein</keyword>
<keyword id="KW-1185">Reference proteome</keyword>
<accession>Q8MR62</accession>
<accession>Q86G89</accession>
<accession>Q9VTS2</accession>
<dbReference type="EMBL" id="AF110513">
    <property type="protein sequence ID" value="AAG21889.1"/>
    <property type="molecule type" value="mRNA"/>
</dbReference>
<dbReference type="EMBL" id="AE014296">
    <property type="protein sequence ID" value="AAF49974.2"/>
    <property type="molecule type" value="Genomic_DNA"/>
</dbReference>
<dbReference type="EMBL" id="AY122105">
    <property type="protein sequence ID" value="AAM52617.1"/>
    <property type="molecule type" value="mRNA"/>
</dbReference>
<dbReference type="RefSeq" id="NP_524032.2">
    <property type="nucleotide sequence ID" value="NM_079308.2"/>
</dbReference>
<dbReference type="SMR" id="Q8MR62"/>
<dbReference type="BioGRID" id="64724">
    <property type="interactions" value="5"/>
</dbReference>
<dbReference type="FunCoup" id="Q8MR62">
    <property type="interactions" value="1671"/>
</dbReference>
<dbReference type="IntAct" id="Q8MR62">
    <property type="interactions" value="2"/>
</dbReference>
<dbReference type="STRING" id="7227.FBpp0075794"/>
<dbReference type="iPTMnet" id="Q8MR62"/>
<dbReference type="PaxDb" id="7227-FBpp0075794"/>
<dbReference type="DNASU" id="39364"/>
<dbReference type="EnsemblMetazoa" id="FBtr0076062">
    <property type="protein sequence ID" value="FBpp0075794"/>
    <property type="gene ID" value="FBgn0036237"/>
</dbReference>
<dbReference type="GeneID" id="39364"/>
<dbReference type="KEGG" id="dme:Dmel_CG18593"/>
<dbReference type="AGR" id="FB:FBgn0036237"/>
<dbReference type="CTD" id="39364"/>
<dbReference type="FlyBase" id="FBgn0036237">
    <property type="gene designation" value="PhLP2"/>
</dbReference>
<dbReference type="VEuPathDB" id="VectorBase:FBgn0036237"/>
<dbReference type="eggNOG" id="KOG3170">
    <property type="taxonomic scope" value="Eukaryota"/>
</dbReference>
<dbReference type="GeneTree" id="ENSGT00940000175722"/>
<dbReference type="HOGENOM" id="CLU_072604_0_0_1"/>
<dbReference type="InParanoid" id="Q8MR62"/>
<dbReference type="OMA" id="FCEIRAN"/>
<dbReference type="OrthoDB" id="45518at2759"/>
<dbReference type="PhylomeDB" id="Q8MR62"/>
<dbReference type="BioGRID-ORCS" id="39364">
    <property type="hits" value="0 hits in 3 CRISPR screens"/>
</dbReference>
<dbReference type="GenomeRNAi" id="39364"/>
<dbReference type="PRO" id="PR:Q8MR62"/>
<dbReference type="Proteomes" id="UP000000803">
    <property type="component" value="Chromosome 3L"/>
</dbReference>
<dbReference type="Bgee" id="FBgn0036237">
    <property type="expression patterns" value="Expressed in adult enteroendocrine precursor cell in adult midgut (Drosophila) and 147 other cell types or tissues"/>
</dbReference>
<dbReference type="GO" id="GO:0005737">
    <property type="term" value="C:cytoplasm"/>
    <property type="evidence" value="ECO:0000250"/>
    <property type="project" value="UniProtKB"/>
</dbReference>
<dbReference type="GO" id="GO:0005829">
    <property type="term" value="C:cytosol"/>
    <property type="evidence" value="ECO:0000250"/>
    <property type="project" value="FlyBase"/>
</dbReference>
<dbReference type="GO" id="GO:0005783">
    <property type="term" value="C:endoplasmic reticulum"/>
    <property type="evidence" value="ECO:0000250"/>
    <property type="project" value="FlyBase"/>
</dbReference>
<dbReference type="GO" id="GO:0044183">
    <property type="term" value="F:protein folding chaperone"/>
    <property type="evidence" value="ECO:0000303"/>
    <property type="project" value="FlyBase"/>
</dbReference>
<dbReference type="GO" id="GO:0006915">
    <property type="term" value="P:apoptotic process"/>
    <property type="evidence" value="ECO:0007669"/>
    <property type="project" value="UniProtKB-KW"/>
</dbReference>
<dbReference type="GO" id="GO:0061077">
    <property type="term" value="P:chaperone-mediated protein folding"/>
    <property type="evidence" value="ECO:0000303"/>
    <property type="project" value="FlyBase"/>
</dbReference>
<dbReference type="GO" id="GO:0006457">
    <property type="term" value="P:protein folding"/>
    <property type="evidence" value="ECO:0000318"/>
    <property type="project" value="GO_Central"/>
</dbReference>
<dbReference type="CDD" id="cd02988">
    <property type="entry name" value="Phd_like_VIAF"/>
    <property type="match status" value="1"/>
</dbReference>
<dbReference type="FunFam" id="3.40.30.10:FF:000461">
    <property type="entry name" value="viral IAP-associated factor homolog"/>
    <property type="match status" value="1"/>
</dbReference>
<dbReference type="Gene3D" id="3.40.30.10">
    <property type="entry name" value="Glutaredoxin"/>
    <property type="match status" value="1"/>
</dbReference>
<dbReference type="InterPro" id="IPR051498">
    <property type="entry name" value="Phosducin-like_chap/apop_reg"/>
</dbReference>
<dbReference type="InterPro" id="IPR024253">
    <property type="entry name" value="Phosducin_thioredoxin-like_dom"/>
</dbReference>
<dbReference type="InterPro" id="IPR036249">
    <property type="entry name" value="Thioredoxin-like_sf"/>
</dbReference>
<dbReference type="PANTHER" id="PTHR45809">
    <property type="entry name" value="VIRAL IAP-ASSOCIATED FACTOR HOMOLOG"/>
    <property type="match status" value="1"/>
</dbReference>
<dbReference type="PANTHER" id="PTHR45809:SF3">
    <property type="entry name" value="VIRAL IAP-ASSOCIATED FACTOR HOMOLOG"/>
    <property type="match status" value="1"/>
</dbReference>
<dbReference type="Pfam" id="PF02114">
    <property type="entry name" value="Phosducin"/>
    <property type="match status" value="1"/>
</dbReference>
<dbReference type="SUPFAM" id="SSF52833">
    <property type="entry name" value="Thioredoxin-like"/>
    <property type="match status" value="1"/>
</dbReference>
<proteinExistence type="evidence at protein level"/>
<gene>
    <name evidence="11" type="primary">PhLP2</name>
    <name evidence="11" type="synonym">viaf</name>
    <name type="synonym">viaf1</name>
    <name evidence="11" type="ORF">CG18593</name>
</gene>
<comment type="function">
    <text evidence="2">Modulates the activation of caspases during apoptosis.</text>
</comment>
<comment type="subcellular location">
    <subcellularLocation>
        <location evidence="1">Cytoplasm</location>
    </subcellularLocation>
</comment>
<comment type="similarity">
    <text evidence="3">Belongs to the phosducin family.</text>
</comment>
<evidence type="ECO:0000250" key="1"/>
<evidence type="ECO:0000250" key="2">
    <source>
        <dbReference type="UniProtKB" id="Q9H2J4"/>
    </source>
</evidence>
<evidence type="ECO:0000255" key="3"/>
<evidence type="ECO:0000269" key="4">
    <source>
    </source>
</evidence>
<evidence type="ECO:0000269" key="5">
    <source>
    </source>
</evidence>
<evidence type="ECO:0000269" key="6">
    <source>
    </source>
</evidence>
<evidence type="ECO:0000305" key="7"/>
<evidence type="ECO:0000312" key="8">
    <source>
        <dbReference type="EMBL" id="AAF49974.2"/>
    </source>
</evidence>
<evidence type="ECO:0000312" key="9">
    <source>
        <dbReference type="EMBL" id="AAG21889.1"/>
    </source>
</evidence>
<evidence type="ECO:0000312" key="10">
    <source>
        <dbReference type="EMBL" id="AAM52617.1"/>
    </source>
</evidence>
<evidence type="ECO:0000312" key="11">
    <source>
        <dbReference type="FlyBase" id="FBgn0036237"/>
    </source>
</evidence>
<evidence type="ECO:0000312" key="12">
    <source>
        <dbReference type="Proteomes" id="UP000000803"/>
    </source>
</evidence>
<organism evidence="12">
    <name type="scientific">Drosophila melanogaster</name>
    <name type="common">Fruit fly</name>
    <dbReference type="NCBI Taxonomy" id="7227"/>
    <lineage>
        <taxon>Eukaryota</taxon>
        <taxon>Metazoa</taxon>
        <taxon>Ecdysozoa</taxon>
        <taxon>Arthropoda</taxon>
        <taxon>Hexapoda</taxon>
        <taxon>Insecta</taxon>
        <taxon>Pterygota</taxon>
        <taxon>Neoptera</taxon>
        <taxon>Endopterygota</taxon>
        <taxon>Diptera</taxon>
        <taxon>Brachycera</taxon>
        <taxon>Muscomorpha</taxon>
        <taxon>Ephydroidea</taxon>
        <taxon>Drosophilidae</taxon>
        <taxon>Drosophila</taxon>
        <taxon>Sophophora</taxon>
    </lineage>
</organism>